<comment type="function">
    <text evidence="1">Specifically methylates the N7 position of guanine in position 527 of 16S rRNA.</text>
</comment>
<comment type="catalytic activity">
    <reaction evidence="1">
        <text>guanosine(527) in 16S rRNA + S-adenosyl-L-methionine = N(7)-methylguanosine(527) in 16S rRNA + S-adenosyl-L-homocysteine</text>
        <dbReference type="Rhea" id="RHEA:42732"/>
        <dbReference type="Rhea" id="RHEA-COMP:10209"/>
        <dbReference type="Rhea" id="RHEA-COMP:10210"/>
        <dbReference type="ChEBI" id="CHEBI:57856"/>
        <dbReference type="ChEBI" id="CHEBI:59789"/>
        <dbReference type="ChEBI" id="CHEBI:74269"/>
        <dbReference type="ChEBI" id="CHEBI:74480"/>
        <dbReference type="EC" id="2.1.1.170"/>
    </reaction>
</comment>
<comment type="subcellular location">
    <subcellularLocation>
        <location evidence="1">Cytoplasm</location>
    </subcellularLocation>
</comment>
<comment type="similarity">
    <text evidence="1">Belongs to the methyltransferase superfamily. RNA methyltransferase RsmG family.</text>
</comment>
<keyword id="KW-0963">Cytoplasm</keyword>
<keyword id="KW-0489">Methyltransferase</keyword>
<keyword id="KW-1185">Reference proteome</keyword>
<keyword id="KW-0698">rRNA processing</keyword>
<keyword id="KW-0949">S-adenosyl-L-methionine</keyword>
<keyword id="KW-0808">Transferase</keyword>
<accession>Q1LHJ9</accession>
<dbReference type="EC" id="2.1.1.170" evidence="1"/>
<dbReference type="EMBL" id="CP000352">
    <property type="protein sequence ID" value="ABF10377.1"/>
    <property type="molecule type" value="Genomic_DNA"/>
</dbReference>
<dbReference type="RefSeq" id="WP_011517929.1">
    <property type="nucleotide sequence ID" value="NC_007973.1"/>
</dbReference>
<dbReference type="SMR" id="Q1LHJ9"/>
<dbReference type="STRING" id="266264.Rmet_3505"/>
<dbReference type="KEGG" id="rme:Rmet_3505"/>
<dbReference type="eggNOG" id="COG0357">
    <property type="taxonomic scope" value="Bacteria"/>
</dbReference>
<dbReference type="HOGENOM" id="CLU_065341_2_0_4"/>
<dbReference type="Proteomes" id="UP000002429">
    <property type="component" value="Chromosome"/>
</dbReference>
<dbReference type="GO" id="GO:0005829">
    <property type="term" value="C:cytosol"/>
    <property type="evidence" value="ECO:0007669"/>
    <property type="project" value="TreeGrafter"/>
</dbReference>
<dbReference type="GO" id="GO:0070043">
    <property type="term" value="F:rRNA (guanine-N7-)-methyltransferase activity"/>
    <property type="evidence" value="ECO:0007669"/>
    <property type="project" value="UniProtKB-UniRule"/>
</dbReference>
<dbReference type="Gene3D" id="3.40.50.150">
    <property type="entry name" value="Vaccinia Virus protein VP39"/>
    <property type="match status" value="1"/>
</dbReference>
<dbReference type="HAMAP" id="MF_00074">
    <property type="entry name" value="16SrRNA_methyltr_G"/>
    <property type="match status" value="1"/>
</dbReference>
<dbReference type="InterPro" id="IPR003682">
    <property type="entry name" value="rRNA_ssu_MeTfrase_G"/>
</dbReference>
<dbReference type="InterPro" id="IPR029063">
    <property type="entry name" value="SAM-dependent_MTases_sf"/>
</dbReference>
<dbReference type="NCBIfam" id="TIGR00138">
    <property type="entry name" value="rsmG_gidB"/>
    <property type="match status" value="1"/>
</dbReference>
<dbReference type="PANTHER" id="PTHR31760">
    <property type="entry name" value="S-ADENOSYL-L-METHIONINE-DEPENDENT METHYLTRANSFERASES SUPERFAMILY PROTEIN"/>
    <property type="match status" value="1"/>
</dbReference>
<dbReference type="PANTHER" id="PTHR31760:SF0">
    <property type="entry name" value="S-ADENOSYL-L-METHIONINE-DEPENDENT METHYLTRANSFERASES SUPERFAMILY PROTEIN"/>
    <property type="match status" value="1"/>
</dbReference>
<dbReference type="Pfam" id="PF02527">
    <property type="entry name" value="GidB"/>
    <property type="match status" value="1"/>
</dbReference>
<dbReference type="PIRSF" id="PIRSF003078">
    <property type="entry name" value="GidB"/>
    <property type="match status" value="1"/>
</dbReference>
<dbReference type="SUPFAM" id="SSF53335">
    <property type="entry name" value="S-adenosyl-L-methionine-dependent methyltransferases"/>
    <property type="match status" value="1"/>
</dbReference>
<reference key="1">
    <citation type="journal article" date="2010" name="PLoS ONE">
        <title>The complete genome sequence of Cupriavidus metallidurans strain CH34, a master survivalist in harsh and anthropogenic environments.</title>
        <authorList>
            <person name="Janssen P.J."/>
            <person name="Van Houdt R."/>
            <person name="Moors H."/>
            <person name="Monsieurs P."/>
            <person name="Morin N."/>
            <person name="Michaux A."/>
            <person name="Benotmane M.A."/>
            <person name="Leys N."/>
            <person name="Vallaeys T."/>
            <person name="Lapidus A."/>
            <person name="Monchy S."/>
            <person name="Medigue C."/>
            <person name="Taghavi S."/>
            <person name="McCorkle S."/>
            <person name="Dunn J."/>
            <person name="van der Lelie D."/>
            <person name="Mergeay M."/>
        </authorList>
    </citation>
    <scope>NUCLEOTIDE SEQUENCE [LARGE SCALE GENOMIC DNA]</scope>
    <source>
        <strain>ATCC 43123 / DSM 2839 / NBRC 102507 / CH34</strain>
    </source>
</reference>
<gene>
    <name evidence="1" type="primary">rsmG</name>
    <name type="ordered locus">Rmet_3505</name>
</gene>
<evidence type="ECO:0000255" key="1">
    <source>
        <dbReference type="HAMAP-Rule" id="MF_00074"/>
    </source>
</evidence>
<organism>
    <name type="scientific">Cupriavidus metallidurans (strain ATCC 43123 / DSM 2839 / NBRC 102507 / CH34)</name>
    <name type="common">Ralstonia metallidurans</name>
    <dbReference type="NCBI Taxonomy" id="266264"/>
    <lineage>
        <taxon>Bacteria</taxon>
        <taxon>Pseudomonadati</taxon>
        <taxon>Pseudomonadota</taxon>
        <taxon>Betaproteobacteria</taxon>
        <taxon>Burkholderiales</taxon>
        <taxon>Burkholderiaceae</taxon>
        <taxon>Cupriavidus</taxon>
    </lineage>
</organism>
<proteinExistence type="inferred from homology"/>
<sequence>MGGSRHFAVDDAAQRRRLEAGLDAIGLALTPAQVDTLFAYLTLLRKWNGVYNLTAIRHPDEMLTHHLLDSLTAVPALAEAARSANVAQGARGRVLDVGSGGGMPGMPLAISCPDVSVLMVDIVQKKTAFLTQCRAQLHLTNAAAHWGPVEKIDDEQGYAVITSRAFAELTDFVTLSGHLLAPGGKLIAMKGVYPQAEIDRMEAAGLMADWQVEAVPKLVVPELDVERHLVVLSRR</sequence>
<feature type="chain" id="PRO_0000335409" description="Ribosomal RNA small subunit methyltransferase G">
    <location>
        <begin position="1"/>
        <end position="235"/>
    </location>
</feature>
<feature type="binding site" evidence="1">
    <location>
        <position position="98"/>
    </location>
    <ligand>
        <name>S-adenosyl-L-methionine</name>
        <dbReference type="ChEBI" id="CHEBI:59789"/>
    </ligand>
</feature>
<feature type="binding site" evidence="1">
    <location>
        <position position="103"/>
    </location>
    <ligand>
        <name>S-adenosyl-L-methionine</name>
        <dbReference type="ChEBI" id="CHEBI:59789"/>
    </ligand>
</feature>
<feature type="binding site" evidence="1">
    <location>
        <begin position="149"/>
        <end position="150"/>
    </location>
    <ligand>
        <name>S-adenosyl-L-methionine</name>
        <dbReference type="ChEBI" id="CHEBI:59789"/>
    </ligand>
</feature>
<feature type="binding site" evidence="1">
    <location>
        <position position="164"/>
    </location>
    <ligand>
        <name>S-adenosyl-L-methionine</name>
        <dbReference type="ChEBI" id="CHEBI:59789"/>
    </ligand>
</feature>
<name>RSMG_CUPMC</name>
<protein>
    <recommendedName>
        <fullName evidence="1">Ribosomal RNA small subunit methyltransferase G</fullName>
        <ecNumber evidence="1">2.1.1.170</ecNumber>
    </recommendedName>
    <alternativeName>
        <fullName evidence="1">16S rRNA 7-methylguanosine methyltransferase</fullName>
        <shortName evidence="1">16S rRNA m7G methyltransferase</shortName>
    </alternativeName>
</protein>